<name>VG66_BPML5</name>
<sequence length="207" mass="23581">MSNTWFTSDLHIGHKRLMEIRNLADDVEEHDATLAKAWDSVVGKDDTVWILGDISSGSTKGQIHALGWISDRPGRKRLILGNHDGPHPMNRDAHKLVGAYWMVFEHVSTAARIRVPLYGDAGGHTDVLLSHFPYVGDHTSEDRHTQWRLRDDGKILIHGHTHSPMILSRHIHRRQIHVGIDAWGRLVSRDEIYDLVNHIHEEEGVHT</sequence>
<feature type="chain" id="PRO_0000164806" description="Gene 66 protein">
    <location>
        <begin position="1"/>
        <end position="207"/>
    </location>
</feature>
<accession>Q05280</accession>
<protein>
    <recommendedName>
        <fullName>Gene 66 protein</fullName>
    </recommendedName>
    <alternativeName>
        <fullName>Gp66</fullName>
    </alternativeName>
</protein>
<keyword id="KW-1185">Reference proteome</keyword>
<proteinExistence type="predicted"/>
<organismHost>
    <name type="scientific">Mycobacterium</name>
    <dbReference type="NCBI Taxonomy" id="1763"/>
</organismHost>
<organism>
    <name type="scientific">Mycobacterium phage L5</name>
    <name type="common">Mycobacteriophage L5</name>
    <dbReference type="NCBI Taxonomy" id="31757"/>
    <lineage>
        <taxon>Viruses</taxon>
        <taxon>Duplodnaviria</taxon>
        <taxon>Heunggongvirae</taxon>
        <taxon>Uroviricota</taxon>
        <taxon>Caudoviricetes</taxon>
        <taxon>Fromanvirus</taxon>
    </lineage>
</organism>
<dbReference type="EMBL" id="Z18946">
    <property type="protein sequence ID" value="CAA79442.1"/>
    <property type="molecule type" value="Genomic_DNA"/>
</dbReference>
<dbReference type="PIR" id="S31011">
    <property type="entry name" value="S31011"/>
</dbReference>
<dbReference type="RefSeq" id="NP_039730.1">
    <property type="nucleotide sequence ID" value="NC_001335.1"/>
</dbReference>
<dbReference type="SMR" id="Q05280"/>
<dbReference type="GeneID" id="2942954"/>
<dbReference type="KEGG" id="vg:2942954"/>
<dbReference type="OrthoDB" id="19076at10239"/>
<dbReference type="Proteomes" id="UP000002123">
    <property type="component" value="Genome"/>
</dbReference>
<dbReference type="GO" id="GO:0016787">
    <property type="term" value="F:hydrolase activity"/>
    <property type="evidence" value="ECO:0007669"/>
    <property type="project" value="InterPro"/>
</dbReference>
<dbReference type="Gene3D" id="3.60.21.10">
    <property type="match status" value="1"/>
</dbReference>
<dbReference type="InterPro" id="IPR004843">
    <property type="entry name" value="Calcineurin-like_PHP_ApaH"/>
</dbReference>
<dbReference type="InterPro" id="IPR029052">
    <property type="entry name" value="Metallo-depent_PP-like"/>
</dbReference>
<dbReference type="Pfam" id="PF00149">
    <property type="entry name" value="Metallophos"/>
    <property type="match status" value="1"/>
</dbReference>
<dbReference type="SUPFAM" id="SSF56300">
    <property type="entry name" value="Metallo-dependent phosphatases"/>
    <property type="match status" value="1"/>
</dbReference>
<gene>
    <name type="primary">66</name>
</gene>
<reference key="1">
    <citation type="journal article" date="1993" name="Mol. Microbiol.">
        <title>DNA sequence, structure and gene expression of mycobacteriophage L5: a phage system for mycobacterial genetics.</title>
        <authorList>
            <person name="Hatfull G.F."/>
            <person name="Sarkis G.J."/>
        </authorList>
    </citation>
    <scope>NUCLEOTIDE SEQUENCE [LARGE SCALE GENOMIC DNA]</scope>
</reference>